<feature type="chain" id="PRO_1000007689" description="DNA-directed RNA polymerase subunit alpha">
    <location>
        <begin position="1"/>
        <end position="337"/>
    </location>
</feature>
<feature type="region of interest" description="Alpha N-terminal domain (alpha-NTD)" evidence="1">
    <location>
        <begin position="1"/>
        <end position="233"/>
    </location>
</feature>
<feature type="region of interest" description="Alpha C-terminal domain (alpha-CTD)" evidence="1">
    <location>
        <begin position="249"/>
        <end position="337"/>
    </location>
</feature>
<evidence type="ECO:0000255" key="1">
    <source>
        <dbReference type="HAMAP-Rule" id="MF_00059"/>
    </source>
</evidence>
<gene>
    <name evidence="1" type="primary">rpoA</name>
    <name type="ordered locus">Oant_1980</name>
</gene>
<protein>
    <recommendedName>
        <fullName evidence="1">DNA-directed RNA polymerase subunit alpha</fullName>
        <shortName evidence="1">RNAP subunit alpha</shortName>
        <ecNumber evidence="1">2.7.7.6</ecNumber>
    </recommendedName>
    <alternativeName>
        <fullName evidence="1">RNA polymerase subunit alpha</fullName>
    </alternativeName>
    <alternativeName>
        <fullName evidence="1">Transcriptase subunit alpha</fullName>
    </alternativeName>
</protein>
<organism>
    <name type="scientific">Brucella anthropi (strain ATCC 49188 / DSM 6882 / CCUG 24695 / JCM 21032 / LMG 3331 / NBRC 15819 / NCTC 12168 / Alc 37)</name>
    <name type="common">Ochrobactrum anthropi</name>
    <dbReference type="NCBI Taxonomy" id="439375"/>
    <lineage>
        <taxon>Bacteria</taxon>
        <taxon>Pseudomonadati</taxon>
        <taxon>Pseudomonadota</taxon>
        <taxon>Alphaproteobacteria</taxon>
        <taxon>Hyphomicrobiales</taxon>
        <taxon>Brucellaceae</taxon>
        <taxon>Brucella/Ochrobactrum group</taxon>
        <taxon>Brucella</taxon>
    </lineage>
</organism>
<comment type="function">
    <text evidence="1">DNA-dependent RNA polymerase catalyzes the transcription of DNA into RNA using the four ribonucleoside triphosphates as substrates.</text>
</comment>
<comment type="catalytic activity">
    <reaction evidence="1">
        <text>RNA(n) + a ribonucleoside 5'-triphosphate = RNA(n+1) + diphosphate</text>
        <dbReference type="Rhea" id="RHEA:21248"/>
        <dbReference type="Rhea" id="RHEA-COMP:14527"/>
        <dbReference type="Rhea" id="RHEA-COMP:17342"/>
        <dbReference type="ChEBI" id="CHEBI:33019"/>
        <dbReference type="ChEBI" id="CHEBI:61557"/>
        <dbReference type="ChEBI" id="CHEBI:140395"/>
        <dbReference type="EC" id="2.7.7.6"/>
    </reaction>
</comment>
<comment type="subunit">
    <text evidence="1">Homodimer. The RNAP catalytic core consists of 2 alpha, 1 beta, 1 beta' and 1 omega subunit. When a sigma factor is associated with the core the holoenzyme is formed, which can initiate transcription.</text>
</comment>
<comment type="domain">
    <text evidence="1">The N-terminal domain is essential for RNAP assembly and basal transcription, whereas the C-terminal domain is involved in interaction with transcriptional regulators and with upstream promoter elements.</text>
</comment>
<comment type="similarity">
    <text evidence="1">Belongs to the RNA polymerase alpha chain family.</text>
</comment>
<reference key="1">
    <citation type="journal article" date="2011" name="J. Bacteriol.">
        <title>Genome of Ochrobactrum anthropi ATCC 49188 T, a versatile opportunistic pathogen and symbiont of several eukaryotic hosts.</title>
        <authorList>
            <person name="Chain P.S."/>
            <person name="Lang D.M."/>
            <person name="Comerci D.J."/>
            <person name="Malfatti S.A."/>
            <person name="Vergez L.M."/>
            <person name="Shin M."/>
            <person name="Ugalde R.A."/>
            <person name="Garcia E."/>
            <person name="Tolmasky M.E."/>
        </authorList>
    </citation>
    <scope>NUCLEOTIDE SEQUENCE [LARGE SCALE GENOMIC DNA]</scope>
    <source>
        <strain>ATCC 49188 / DSM 6882 / CCUG 24695 / JCM 21032 / LMG 3331 / NBRC 15819 / NCTC 12168 / Alc 37</strain>
    </source>
</reference>
<keyword id="KW-0240">DNA-directed RNA polymerase</keyword>
<keyword id="KW-0548">Nucleotidyltransferase</keyword>
<keyword id="KW-1185">Reference proteome</keyword>
<keyword id="KW-0804">Transcription</keyword>
<keyword id="KW-0808">Transferase</keyword>
<proteinExistence type="inferred from homology"/>
<sequence>MIQKNWQELIKPNKVDFITNGSRTHATVVAEPLERGFGLTLGNALRRVLLSSLRGAAVTAIQIDGVLHEFSSIPGVREDVTDIVLNVKEIAIRMEGEGPKRMVVRKEGPGVVTAGDIQTVGDVEILNPDHVICTLDEGAEIRMEFTVNTGKGYVPADRNRAEDAPIGLIPVDSLYSPVRKVSYKIENTREGQVLDYDKLTLNIETNGSVSGEDAVAYAARILQDQLAIFVNFEEPQKEAPQEQVAELAFNPALLKKVDELELSVRSANCLKNDNIVYIGDLIQKTEAEMLRTPNFGRKSLNEIKEVLASMGLHLGMEIPSWPPENIEDLAKRYEDQY</sequence>
<name>RPOA_BRUA4</name>
<accession>A6X0E2</accession>
<dbReference type="EC" id="2.7.7.6" evidence="1"/>
<dbReference type="EMBL" id="CP000758">
    <property type="protein sequence ID" value="ABS14696.1"/>
    <property type="molecule type" value="Genomic_DNA"/>
</dbReference>
<dbReference type="RefSeq" id="WP_006467001.1">
    <property type="nucleotide sequence ID" value="NC_009667.1"/>
</dbReference>
<dbReference type="SMR" id="A6X0E2"/>
<dbReference type="STRING" id="439375.Oant_1980"/>
<dbReference type="KEGG" id="oan:Oant_1980"/>
<dbReference type="eggNOG" id="COG0202">
    <property type="taxonomic scope" value="Bacteria"/>
</dbReference>
<dbReference type="HOGENOM" id="CLU_053084_0_0_5"/>
<dbReference type="PhylomeDB" id="A6X0E2"/>
<dbReference type="Proteomes" id="UP000002301">
    <property type="component" value="Chromosome 1"/>
</dbReference>
<dbReference type="GO" id="GO:0005737">
    <property type="term" value="C:cytoplasm"/>
    <property type="evidence" value="ECO:0007669"/>
    <property type="project" value="UniProtKB-ARBA"/>
</dbReference>
<dbReference type="GO" id="GO:0000428">
    <property type="term" value="C:DNA-directed RNA polymerase complex"/>
    <property type="evidence" value="ECO:0007669"/>
    <property type="project" value="UniProtKB-KW"/>
</dbReference>
<dbReference type="GO" id="GO:0003677">
    <property type="term" value="F:DNA binding"/>
    <property type="evidence" value="ECO:0007669"/>
    <property type="project" value="UniProtKB-UniRule"/>
</dbReference>
<dbReference type="GO" id="GO:0003899">
    <property type="term" value="F:DNA-directed RNA polymerase activity"/>
    <property type="evidence" value="ECO:0007669"/>
    <property type="project" value="UniProtKB-UniRule"/>
</dbReference>
<dbReference type="GO" id="GO:0046983">
    <property type="term" value="F:protein dimerization activity"/>
    <property type="evidence" value="ECO:0007669"/>
    <property type="project" value="InterPro"/>
</dbReference>
<dbReference type="GO" id="GO:0006351">
    <property type="term" value="P:DNA-templated transcription"/>
    <property type="evidence" value="ECO:0007669"/>
    <property type="project" value="UniProtKB-UniRule"/>
</dbReference>
<dbReference type="CDD" id="cd06928">
    <property type="entry name" value="RNAP_alpha_NTD"/>
    <property type="match status" value="1"/>
</dbReference>
<dbReference type="FunFam" id="1.10.150.20:FF:000001">
    <property type="entry name" value="DNA-directed RNA polymerase subunit alpha"/>
    <property type="match status" value="1"/>
</dbReference>
<dbReference type="FunFam" id="2.170.120.12:FF:000001">
    <property type="entry name" value="DNA-directed RNA polymerase subunit alpha"/>
    <property type="match status" value="1"/>
</dbReference>
<dbReference type="Gene3D" id="1.10.150.20">
    <property type="entry name" value="5' to 3' exonuclease, C-terminal subdomain"/>
    <property type="match status" value="1"/>
</dbReference>
<dbReference type="Gene3D" id="2.170.120.12">
    <property type="entry name" value="DNA-directed RNA polymerase, insert domain"/>
    <property type="match status" value="1"/>
</dbReference>
<dbReference type="Gene3D" id="3.30.1360.10">
    <property type="entry name" value="RNA polymerase, RBP11-like subunit"/>
    <property type="match status" value="1"/>
</dbReference>
<dbReference type="HAMAP" id="MF_00059">
    <property type="entry name" value="RNApol_bact_RpoA"/>
    <property type="match status" value="1"/>
</dbReference>
<dbReference type="InterPro" id="IPR011262">
    <property type="entry name" value="DNA-dir_RNA_pol_insert"/>
</dbReference>
<dbReference type="InterPro" id="IPR011263">
    <property type="entry name" value="DNA-dir_RNA_pol_RpoA/D/Rpb3"/>
</dbReference>
<dbReference type="InterPro" id="IPR011773">
    <property type="entry name" value="DNA-dir_RpoA"/>
</dbReference>
<dbReference type="InterPro" id="IPR036603">
    <property type="entry name" value="RBP11-like"/>
</dbReference>
<dbReference type="InterPro" id="IPR011260">
    <property type="entry name" value="RNAP_asu_C"/>
</dbReference>
<dbReference type="InterPro" id="IPR036643">
    <property type="entry name" value="RNApol_insert_sf"/>
</dbReference>
<dbReference type="NCBIfam" id="NF003513">
    <property type="entry name" value="PRK05182.1-2"/>
    <property type="match status" value="1"/>
</dbReference>
<dbReference type="NCBIfam" id="NF003519">
    <property type="entry name" value="PRK05182.2-5"/>
    <property type="match status" value="1"/>
</dbReference>
<dbReference type="NCBIfam" id="TIGR02027">
    <property type="entry name" value="rpoA"/>
    <property type="match status" value="1"/>
</dbReference>
<dbReference type="Pfam" id="PF01000">
    <property type="entry name" value="RNA_pol_A_bac"/>
    <property type="match status" value="1"/>
</dbReference>
<dbReference type="Pfam" id="PF03118">
    <property type="entry name" value="RNA_pol_A_CTD"/>
    <property type="match status" value="1"/>
</dbReference>
<dbReference type="Pfam" id="PF01193">
    <property type="entry name" value="RNA_pol_L"/>
    <property type="match status" value="1"/>
</dbReference>
<dbReference type="SMART" id="SM00662">
    <property type="entry name" value="RPOLD"/>
    <property type="match status" value="1"/>
</dbReference>
<dbReference type="SUPFAM" id="SSF47789">
    <property type="entry name" value="C-terminal domain of RNA polymerase alpha subunit"/>
    <property type="match status" value="1"/>
</dbReference>
<dbReference type="SUPFAM" id="SSF56553">
    <property type="entry name" value="Insert subdomain of RNA polymerase alpha subunit"/>
    <property type="match status" value="1"/>
</dbReference>
<dbReference type="SUPFAM" id="SSF55257">
    <property type="entry name" value="RBP11-like subunits of RNA polymerase"/>
    <property type="match status" value="1"/>
</dbReference>